<accession>Q58977</accession>
<gene>
    <name type="ordered locus">MJ1582</name>
</gene>
<keyword id="KW-0378">Hydrolase</keyword>
<keyword id="KW-0479">Metal-binding</keyword>
<keyword id="KW-1185">Reference proteome</keyword>
<sequence>MRDVKYVDAHCHIEDKAFNKNRDEVIERAKKEDVIIVTSGASLGGCLRALELRKKYNIYLTLGYHPSRVKADDKVIEKVYNLIKNNEYEILAIGEIGMDIKDENYKRQEEIFKKFLSLAEELNKPIVVHARGFERKIFDIAKDKVDIMFHCYSGDVELAKEIGKEGHLISISTLVCFSEHHKKLVESLDLEYLTTETDSPYLSPIKGTKNEPKNVKLVIEEIAKIKEMEVEEVKDVIYKNTCKFFKRRL</sequence>
<evidence type="ECO:0000250" key="1">
    <source>
        <dbReference type="UniProtKB" id="P0AFQ7"/>
    </source>
</evidence>
<evidence type="ECO:0000305" key="2"/>
<name>Y1582_METJA</name>
<dbReference type="EC" id="3.1.-.-" evidence="2"/>
<dbReference type="EMBL" id="L77117">
    <property type="protein sequence ID" value="AAB99602.1"/>
    <property type="molecule type" value="Genomic_DNA"/>
</dbReference>
<dbReference type="PIR" id="E64497">
    <property type="entry name" value="E64497"/>
</dbReference>
<dbReference type="RefSeq" id="WP_010871107.1">
    <property type="nucleotide sequence ID" value="NC_000909.1"/>
</dbReference>
<dbReference type="SMR" id="Q58977"/>
<dbReference type="FunCoup" id="Q58977">
    <property type="interactions" value="105"/>
</dbReference>
<dbReference type="STRING" id="243232.MJ_1582"/>
<dbReference type="PaxDb" id="243232-MJ_1582"/>
<dbReference type="EnsemblBacteria" id="AAB99602">
    <property type="protein sequence ID" value="AAB99602"/>
    <property type="gene ID" value="MJ_1582"/>
</dbReference>
<dbReference type="GeneID" id="1452491"/>
<dbReference type="KEGG" id="mja:MJ_1582"/>
<dbReference type="eggNOG" id="arCOG00891">
    <property type="taxonomic scope" value="Archaea"/>
</dbReference>
<dbReference type="HOGENOM" id="CLU_031506_5_2_2"/>
<dbReference type="InParanoid" id="Q58977"/>
<dbReference type="OrthoDB" id="26412at2157"/>
<dbReference type="PhylomeDB" id="Q58977"/>
<dbReference type="Proteomes" id="UP000000805">
    <property type="component" value="Chromosome"/>
</dbReference>
<dbReference type="GO" id="GO:0004536">
    <property type="term" value="F:DNA nuclease activity"/>
    <property type="evidence" value="ECO:0007669"/>
    <property type="project" value="InterPro"/>
</dbReference>
<dbReference type="GO" id="GO:0046872">
    <property type="term" value="F:metal ion binding"/>
    <property type="evidence" value="ECO:0007669"/>
    <property type="project" value="UniProtKB-KW"/>
</dbReference>
<dbReference type="CDD" id="cd01310">
    <property type="entry name" value="TatD_DNAse"/>
    <property type="match status" value="1"/>
</dbReference>
<dbReference type="Gene3D" id="3.20.20.140">
    <property type="entry name" value="Metal-dependent hydrolases"/>
    <property type="match status" value="1"/>
</dbReference>
<dbReference type="InterPro" id="IPR018228">
    <property type="entry name" value="DNase_TatD-rel_CS"/>
</dbReference>
<dbReference type="InterPro" id="IPR032466">
    <property type="entry name" value="Metal_Hydrolase"/>
</dbReference>
<dbReference type="InterPro" id="IPR001130">
    <property type="entry name" value="TatD-like"/>
</dbReference>
<dbReference type="InterPro" id="IPR015991">
    <property type="entry name" value="TatD/YcfH-like"/>
</dbReference>
<dbReference type="NCBIfam" id="TIGR00010">
    <property type="entry name" value="YchF/TatD family DNA exonuclease"/>
    <property type="match status" value="1"/>
</dbReference>
<dbReference type="PANTHER" id="PTHR46317">
    <property type="entry name" value="HYDROLASE OF PHP SUPERFAMILY-RELATED PROTEIN"/>
    <property type="match status" value="1"/>
</dbReference>
<dbReference type="PANTHER" id="PTHR46317:SF1">
    <property type="entry name" value="HYDROLASE, TATD FAMILY"/>
    <property type="match status" value="1"/>
</dbReference>
<dbReference type="Pfam" id="PF01026">
    <property type="entry name" value="TatD_DNase"/>
    <property type="match status" value="1"/>
</dbReference>
<dbReference type="PIRSF" id="PIRSF005902">
    <property type="entry name" value="DNase_TatD"/>
    <property type="match status" value="1"/>
</dbReference>
<dbReference type="SUPFAM" id="SSF51556">
    <property type="entry name" value="Metallo-dependent hydrolases"/>
    <property type="match status" value="1"/>
</dbReference>
<dbReference type="PROSITE" id="PS01091">
    <property type="entry name" value="TATD_3"/>
    <property type="match status" value="1"/>
</dbReference>
<reference key="1">
    <citation type="journal article" date="1996" name="Science">
        <title>Complete genome sequence of the methanogenic archaeon, Methanococcus jannaschii.</title>
        <authorList>
            <person name="Bult C.J."/>
            <person name="White O."/>
            <person name="Olsen G.J."/>
            <person name="Zhou L."/>
            <person name="Fleischmann R.D."/>
            <person name="Sutton G.G."/>
            <person name="Blake J.A."/>
            <person name="FitzGerald L.M."/>
            <person name="Clayton R.A."/>
            <person name="Gocayne J.D."/>
            <person name="Kerlavage A.R."/>
            <person name="Dougherty B.A."/>
            <person name="Tomb J.-F."/>
            <person name="Adams M.D."/>
            <person name="Reich C.I."/>
            <person name="Overbeek R."/>
            <person name="Kirkness E.F."/>
            <person name="Weinstock K.G."/>
            <person name="Merrick J.M."/>
            <person name="Glodek A."/>
            <person name="Scott J.L."/>
            <person name="Geoghagen N.S.M."/>
            <person name="Weidman J.F."/>
            <person name="Fuhrmann J.L."/>
            <person name="Nguyen D."/>
            <person name="Utterback T.R."/>
            <person name="Kelley J.M."/>
            <person name="Peterson J.D."/>
            <person name="Sadow P.W."/>
            <person name="Hanna M.C."/>
            <person name="Cotton M.D."/>
            <person name="Roberts K.M."/>
            <person name="Hurst M.A."/>
            <person name="Kaine B.P."/>
            <person name="Borodovsky M."/>
            <person name="Klenk H.-P."/>
            <person name="Fraser C.M."/>
            <person name="Smith H.O."/>
            <person name="Woese C.R."/>
            <person name="Venter J.C."/>
        </authorList>
    </citation>
    <scope>NUCLEOTIDE SEQUENCE [LARGE SCALE GENOMIC DNA]</scope>
    <source>
        <strain>ATCC 43067 / DSM 2661 / JAL-1 / JCM 10045 / NBRC 100440</strain>
    </source>
</reference>
<proteinExistence type="inferred from homology"/>
<feature type="chain" id="PRO_0000202012" description="Uncharacterized metal-dependent hydrolase MJ1582">
    <location>
        <begin position="1"/>
        <end position="249"/>
    </location>
</feature>
<feature type="binding site" evidence="1">
    <location>
        <position position="10"/>
    </location>
    <ligand>
        <name>a divalent metal cation</name>
        <dbReference type="ChEBI" id="CHEBI:60240"/>
        <label>1</label>
    </ligand>
</feature>
<feature type="binding site" evidence="1">
    <location>
        <position position="12"/>
    </location>
    <ligand>
        <name>a divalent metal cation</name>
        <dbReference type="ChEBI" id="CHEBI:60240"/>
        <label>1</label>
    </ligand>
</feature>
<feature type="binding site" evidence="1">
    <location>
        <position position="95"/>
    </location>
    <ligand>
        <name>a divalent metal cation</name>
        <dbReference type="ChEBI" id="CHEBI:60240"/>
        <label>1</label>
    </ligand>
</feature>
<feature type="binding site" evidence="1">
    <location>
        <position position="95"/>
    </location>
    <ligand>
        <name>a divalent metal cation</name>
        <dbReference type="ChEBI" id="CHEBI:60240"/>
        <label>2</label>
    </ligand>
</feature>
<feature type="binding site" evidence="1">
    <location>
        <position position="129"/>
    </location>
    <ligand>
        <name>a divalent metal cation</name>
        <dbReference type="ChEBI" id="CHEBI:60240"/>
        <label>2</label>
    </ligand>
</feature>
<feature type="binding site" evidence="1">
    <location>
        <position position="150"/>
    </location>
    <ligand>
        <name>a divalent metal cation</name>
        <dbReference type="ChEBI" id="CHEBI:60240"/>
        <label>2</label>
    </ligand>
</feature>
<feature type="binding site" evidence="1">
    <location>
        <position position="198"/>
    </location>
    <ligand>
        <name>a divalent metal cation</name>
        <dbReference type="ChEBI" id="CHEBI:60240"/>
        <label>1</label>
    </ligand>
</feature>
<organism>
    <name type="scientific">Methanocaldococcus jannaschii (strain ATCC 43067 / DSM 2661 / JAL-1 / JCM 10045 / NBRC 100440)</name>
    <name type="common">Methanococcus jannaschii</name>
    <dbReference type="NCBI Taxonomy" id="243232"/>
    <lineage>
        <taxon>Archaea</taxon>
        <taxon>Methanobacteriati</taxon>
        <taxon>Methanobacteriota</taxon>
        <taxon>Methanomada group</taxon>
        <taxon>Methanococci</taxon>
        <taxon>Methanococcales</taxon>
        <taxon>Methanocaldococcaceae</taxon>
        <taxon>Methanocaldococcus</taxon>
    </lineage>
</organism>
<protein>
    <recommendedName>
        <fullName evidence="2">Uncharacterized metal-dependent hydrolase MJ1582</fullName>
        <ecNumber evidence="2">3.1.-.-</ecNumber>
    </recommendedName>
</protein>
<comment type="cofactor">
    <cofactor evidence="1">
        <name>a divalent metal cation</name>
        <dbReference type="ChEBI" id="CHEBI:60240"/>
    </cofactor>
    <text evidence="1">Binds 2 divalent metal cations per subunit.</text>
</comment>
<comment type="similarity">
    <text evidence="2">Belongs to the metallo-dependent hydrolases superfamily. TatD-type hydrolase family.</text>
</comment>